<sequence length="679" mass="74161">MSKIRVYELAKELRVPSKVLINVLMDEFGVEVKNHMSVIEDEDAALIKELLAGSEANSELVAEYEAELAEEVNNAAKKKKKRKKGSEDDNLEQDVEVIEIGKTITVKELAEKLNKPVNDVIKTLIFTGVMAAINQEIDFETAEKVAEKYEVAVYEKEEENTLEEFEEETDVEEENLAKRPPIITVMGHVDHGKTSLLDAIRKSKVTSTEAGGITQHIGAYTVEVNGETLTFLDTPGHEAFTAMRARGAQITDVVILVVAADDGIMPQTVEAINHCKAANVPMIVAINKMDREGANPDRVKQELTEHGLVVEDWGGDIIAVPVSAKTRENIDTLLEMVLLTSEMQELKADAGRKAKGTVVEAKLDKGRGAVATLLVQNGTLHMGDSIIVGSTYGRIRAMFDDSGKKIKSAGPSIPVEVLGLSEVPAAGDRFTVVKDEKTARNMAEARKEKIRQESFATSHRVSLEDLYSQIKEGSVKELSVIVKADVQGSVEAIKASLEKLSTDDVKVRVIHGAVGAISETDITLAAASNAIVIGFNVRPDNNAVAASERDGVEVKTYRVIYDAIEDIKSAMIGMLDPEYKEVVLGTAEIRATYKISNVGTIAGGYVLTGKLVRNADVRVIREGIVIFESKLASLKRFKDDVKEVNAGYECGFSVEKFNDIKEGDIIEAYTMEAVQRKEL</sequence>
<reference key="1">
    <citation type="journal article" date="2006" name="Genome Res.">
        <title>Skewed genomic variability in strains of the toxigenic bacterial pathogen, Clostridium perfringens.</title>
        <authorList>
            <person name="Myers G.S.A."/>
            <person name="Rasko D.A."/>
            <person name="Cheung J.K."/>
            <person name="Ravel J."/>
            <person name="Seshadri R."/>
            <person name="DeBoy R.T."/>
            <person name="Ren Q."/>
            <person name="Varga J."/>
            <person name="Awad M.M."/>
            <person name="Brinkac L.M."/>
            <person name="Daugherty S.C."/>
            <person name="Haft D.H."/>
            <person name="Dodson R.J."/>
            <person name="Madupu R."/>
            <person name="Nelson W.C."/>
            <person name="Rosovitz M.J."/>
            <person name="Sullivan S.A."/>
            <person name="Khouri H."/>
            <person name="Dimitrov G.I."/>
            <person name="Watkins K.L."/>
            <person name="Mulligan S."/>
            <person name="Benton J."/>
            <person name="Radune D."/>
            <person name="Fisher D.J."/>
            <person name="Atkins H.S."/>
            <person name="Hiscox T."/>
            <person name="Jost B.H."/>
            <person name="Billington S.J."/>
            <person name="Songer J.G."/>
            <person name="McClane B.A."/>
            <person name="Titball R.W."/>
            <person name="Rood J.I."/>
            <person name="Melville S.B."/>
            <person name="Paulsen I.T."/>
        </authorList>
    </citation>
    <scope>NUCLEOTIDE SEQUENCE [LARGE SCALE GENOMIC DNA]</scope>
    <source>
        <strain>ATCC 13124 / DSM 756 / JCM 1290 / NCIMB 6125 / NCTC 8237 / S 107 / Type A</strain>
    </source>
</reference>
<accession>Q0TPR7</accession>
<organism>
    <name type="scientific">Clostridium perfringens (strain ATCC 13124 / DSM 756 / JCM 1290 / NCIMB 6125 / NCTC 8237 / Type A)</name>
    <dbReference type="NCBI Taxonomy" id="195103"/>
    <lineage>
        <taxon>Bacteria</taxon>
        <taxon>Bacillati</taxon>
        <taxon>Bacillota</taxon>
        <taxon>Clostridia</taxon>
        <taxon>Eubacteriales</taxon>
        <taxon>Clostridiaceae</taxon>
        <taxon>Clostridium</taxon>
    </lineage>
</organism>
<proteinExistence type="inferred from homology"/>
<feature type="chain" id="PRO_1000008233" description="Translation initiation factor IF-2">
    <location>
        <begin position="1"/>
        <end position="679"/>
    </location>
</feature>
<feature type="domain" description="tr-type G">
    <location>
        <begin position="178"/>
        <end position="347"/>
    </location>
</feature>
<feature type="region of interest" description="G1" evidence="1">
    <location>
        <begin position="187"/>
        <end position="194"/>
    </location>
</feature>
<feature type="region of interest" description="G2" evidence="1">
    <location>
        <begin position="212"/>
        <end position="216"/>
    </location>
</feature>
<feature type="region of interest" description="G3" evidence="1">
    <location>
        <begin position="233"/>
        <end position="236"/>
    </location>
</feature>
<feature type="region of interest" description="G4" evidence="1">
    <location>
        <begin position="287"/>
        <end position="290"/>
    </location>
</feature>
<feature type="region of interest" description="G5" evidence="1">
    <location>
        <begin position="323"/>
        <end position="325"/>
    </location>
</feature>
<feature type="binding site" evidence="2">
    <location>
        <begin position="187"/>
        <end position="194"/>
    </location>
    <ligand>
        <name>GTP</name>
        <dbReference type="ChEBI" id="CHEBI:37565"/>
    </ligand>
</feature>
<feature type="binding site" evidence="2">
    <location>
        <begin position="233"/>
        <end position="237"/>
    </location>
    <ligand>
        <name>GTP</name>
        <dbReference type="ChEBI" id="CHEBI:37565"/>
    </ligand>
</feature>
<feature type="binding site" evidence="2">
    <location>
        <begin position="287"/>
        <end position="290"/>
    </location>
    <ligand>
        <name>GTP</name>
        <dbReference type="ChEBI" id="CHEBI:37565"/>
    </ligand>
</feature>
<protein>
    <recommendedName>
        <fullName evidence="2">Translation initiation factor IF-2</fullName>
    </recommendedName>
</protein>
<evidence type="ECO:0000250" key="1"/>
<evidence type="ECO:0000255" key="2">
    <source>
        <dbReference type="HAMAP-Rule" id="MF_00100"/>
    </source>
</evidence>
<name>IF2_CLOP1</name>
<comment type="function">
    <text evidence="2">One of the essential components for the initiation of protein synthesis. Protects formylmethionyl-tRNA from spontaneous hydrolysis and promotes its binding to the 30S ribosomal subunits. Also involved in the hydrolysis of GTP during the formation of the 70S ribosomal complex.</text>
</comment>
<comment type="subcellular location">
    <subcellularLocation>
        <location evidence="2">Cytoplasm</location>
    </subcellularLocation>
</comment>
<comment type="similarity">
    <text evidence="2">Belongs to the TRAFAC class translation factor GTPase superfamily. Classic translation factor GTPase family. IF-2 subfamily.</text>
</comment>
<gene>
    <name evidence="2" type="primary">infB</name>
    <name type="ordered locus">CPF_1940</name>
</gene>
<dbReference type="EMBL" id="CP000246">
    <property type="protein sequence ID" value="ABG83328.1"/>
    <property type="molecule type" value="Genomic_DNA"/>
</dbReference>
<dbReference type="RefSeq" id="WP_003449445.1">
    <property type="nucleotide sequence ID" value="NC_008261.1"/>
</dbReference>
<dbReference type="SMR" id="Q0TPR7"/>
<dbReference type="STRING" id="195103.CPF_1940"/>
<dbReference type="PaxDb" id="195103-CPF_1940"/>
<dbReference type="GeneID" id="93001776"/>
<dbReference type="KEGG" id="cpf:CPF_1940"/>
<dbReference type="eggNOG" id="COG0532">
    <property type="taxonomic scope" value="Bacteria"/>
</dbReference>
<dbReference type="HOGENOM" id="CLU_006301_5_1_9"/>
<dbReference type="Proteomes" id="UP000001823">
    <property type="component" value="Chromosome"/>
</dbReference>
<dbReference type="GO" id="GO:0005829">
    <property type="term" value="C:cytosol"/>
    <property type="evidence" value="ECO:0007669"/>
    <property type="project" value="TreeGrafter"/>
</dbReference>
<dbReference type="GO" id="GO:0005525">
    <property type="term" value="F:GTP binding"/>
    <property type="evidence" value="ECO:0007669"/>
    <property type="project" value="UniProtKB-KW"/>
</dbReference>
<dbReference type="GO" id="GO:0003924">
    <property type="term" value="F:GTPase activity"/>
    <property type="evidence" value="ECO:0007669"/>
    <property type="project" value="UniProtKB-UniRule"/>
</dbReference>
<dbReference type="GO" id="GO:0003743">
    <property type="term" value="F:translation initiation factor activity"/>
    <property type="evidence" value="ECO:0007669"/>
    <property type="project" value="UniProtKB-UniRule"/>
</dbReference>
<dbReference type="CDD" id="cd01887">
    <property type="entry name" value="IF2_eIF5B"/>
    <property type="match status" value="1"/>
</dbReference>
<dbReference type="CDD" id="cd03702">
    <property type="entry name" value="IF2_mtIF2_II"/>
    <property type="match status" value="1"/>
</dbReference>
<dbReference type="CDD" id="cd03692">
    <property type="entry name" value="mtIF2_IVc"/>
    <property type="match status" value="1"/>
</dbReference>
<dbReference type="FunFam" id="2.40.30.10:FF:000007">
    <property type="entry name" value="Translation initiation factor IF-2"/>
    <property type="match status" value="1"/>
</dbReference>
<dbReference type="FunFam" id="2.40.30.10:FF:000008">
    <property type="entry name" value="Translation initiation factor IF-2"/>
    <property type="match status" value="1"/>
</dbReference>
<dbReference type="FunFam" id="3.40.50.10050:FF:000001">
    <property type="entry name" value="Translation initiation factor IF-2"/>
    <property type="match status" value="1"/>
</dbReference>
<dbReference type="FunFam" id="3.40.50.300:FF:000019">
    <property type="entry name" value="Translation initiation factor IF-2"/>
    <property type="match status" value="1"/>
</dbReference>
<dbReference type="Gene3D" id="1.10.10.2480">
    <property type="match status" value="1"/>
</dbReference>
<dbReference type="Gene3D" id="3.40.50.300">
    <property type="entry name" value="P-loop containing nucleotide triphosphate hydrolases"/>
    <property type="match status" value="1"/>
</dbReference>
<dbReference type="Gene3D" id="2.40.30.10">
    <property type="entry name" value="Translation factors"/>
    <property type="match status" value="2"/>
</dbReference>
<dbReference type="Gene3D" id="3.40.50.10050">
    <property type="entry name" value="Translation initiation factor IF- 2, domain 3"/>
    <property type="match status" value="1"/>
</dbReference>
<dbReference type="HAMAP" id="MF_00100_B">
    <property type="entry name" value="IF_2_B"/>
    <property type="match status" value="1"/>
</dbReference>
<dbReference type="InterPro" id="IPR053905">
    <property type="entry name" value="EF-G-like_DII"/>
</dbReference>
<dbReference type="InterPro" id="IPR004161">
    <property type="entry name" value="EFTu-like_2"/>
</dbReference>
<dbReference type="InterPro" id="IPR044145">
    <property type="entry name" value="IF2_II"/>
</dbReference>
<dbReference type="InterPro" id="IPR006847">
    <property type="entry name" value="IF2_N"/>
</dbReference>
<dbReference type="InterPro" id="IPR027417">
    <property type="entry name" value="P-loop_NTPase"/>
</dbReference>
<dbReference type="InterPro" id="IPR005225">
    <property type="entry name" value="Small_GTP-bd"/>
</dbReference>
<dbReference type="InterPro" id="IPR000795">
    <property type="entry name" value="T_Tr_GTP-bd_dom"/>
</dbReference>
<dbReference type="InterPro" id="IPR000178">
    <property type="entry name" value="TF_IF2_bacterial-like"/>
</dbReference>
<dbReference type="InterPro" id="IPR015760">
    <property type="entry name" value="TIF_IF2"/>
</dbReference>
<dbReference type="InterPro" id="IPR023115">
    <property type="entry name" value="TIF_IF2_dom3"/>
</dbReference>
<dbReference type="InterPro" id="IPR036925">
    <property type="entry name" value="TIF_IF2_dom3_sf"/>
</dbReference>
<dbReference type="InterPro" id="IPR009000">
    <property type="entry name" value="Transl_B-barrel_sf"/>
</dbReference>
<dbReference type="NCBIfam" id="TIGR00487">
    <property type="entry name" value="IF-2"/>
    <property type="match status" value="1"/>
</dbReference>
<dbReference type="NCBIfam" id="TIGR00231">
    <property type="entry name" value="small_GTP"/>
    <property type="match status" value="1"/>
</dbReference>
<dbReference type="PANTHER" id="PTHR43381:SF5">
    <property type="entry name" value="TR-TYPE G DOMAIN-CONTAINING PROTEIN"/>
    <property type="match status" value="1"/>
</dbReference>
<dbReference type="PANTHER" id="PTHR43381">
    <property type="entry name" value="TRANSLATION INITIATION FACTOR IF-2-RELATED"/>
    <property type="match status" value="1"/>
</dbReference>
<dbReference type="Pfam" id="PF22042">
    <property type="entry name" value="EF-G_D2"/>
    <property type="match status" value="1"/>
</dbReference>
<dbReference type="Pfam" id="PF00009">
    <property type="entry name" value="GTP_EFTU"/>
    <property type="match status" value="1"/>
</dbReference>
<dbReference type="Pfam" id="PF03144">
    <property type="entry name" value="GTP_EFTU_D2"/>
    <property type="match status" value="1"/>
</dbReference>
<dbReference type="Pfam" id="PF11987">
    <property type="entry name" value="IF-2"/>
    <property type="match status" value="1"/>
</dbReference>
<dbReference type="Pfam" id="PF04760">
    <property type="entry name" value="IF2_N"/>
    <property type="match status" value="2"/>
</dbReference>
<dbReference type="SUPFAM" id="SSF52156">
    <property type="entry name" value="Initiation factor IF2/eIF5b, domain 3"/>
    <property type="match status" value="1"/>
</dbReference>
<dbReference type="SUPFAM" id="SSF52540">
    <property type="entry name" value="P-loop containing nucleoside triphosphate hydrolases"/>
    <property type="match status" value="1"/>
</dbReference>
<dbReference type="SUPFAM" id="SSF50447">
    <property type="entry name" value="Translation proteins"/>
    <property type="match status" value="2"/>
</dbReference>
<dbReference type="PROSITE" id="PS51722">
    <property type="entry name" value="G_TR_2"/>
    <property type="match status" value="1"/>
</dbReference>
<dbReference type="PROSITE" id="PS01176">
    <property type="entry name" value="IF2"/>
    <property type="match status" value="1"/>
</dbReference>
<keyword id="KW-0963">Cytoplasm</keyword>
<keyword id="KW-0342">GTP-binding</keyword>
<keyword id="KW-0396">Initiation factor</keyword>
<keyword id="KW-0547">Nucleotide-binding</keyword>
<keyword id="KW-0648">Protein biosynthesis</keyword>